<gene>
    <name evidence="1" type="primary">purC</name>
    <name type="ordered locus">OB0742</name>
</gene>
<comment type="catalytic activity">
    <reaction evidence="1">
        <text>5-amino-1-(5-phospho-D-ribosyl)imidazole-4-carboxylate + L-aspartate + ATP = (2S)-2-[5-amino-1-(5-phospho-beta-D-ribosyl)imidazole-4-carboxamido]succinate + ADP + phosphate + 2 H(+)</text>
        <dbReference type="Rhea" id="RHEA:22628"/>
        <dbReference type="ChEBI" id="CHEBI:15378"/>
        <dbReference type="ChEBI" id="CHEBI:29991"/>
        <dbReference type="ChEBI" id="CHEBI:30616"/>
        <dbReference type="ChEBI" id="CHEBI:43474"/>
        <dbReference type="ChEBI" id="CHEBI:58443"/>
        <dbReference type="ChEBI" id="CHEBI:77657"/>
        <dbReference type="ChEBI" id="CHEBI:456216"/>
        <dbReference type="EC" id="6.3.2.6"/>
    </reaction>
</comment>
<comment type="pathway">
    <text evidence="1">Purine metabolism; IMP biosynthesis via de novo pathway; 5-amino-1-(5-phospho-D-ribosyl)imidazole-4-carboxamide from 5-amino-1-(5-phospho-D-ribosyl)imidazole-4-carboxylate: step 1/2.</text>
</comment>
<comment type="similarity">
    <text evidence="1">Belongs to the SAICAR synthetase family.</text>
</comment>
<reference key="1">
    <citation type="journal article" date="2002" name="Nucleic Acids Res.">
        <title>Genome sequence of Oceanobacillus iheyensis isolated from the Iheya Ridge and its unexpected adaptive capabilities to extreme environments.</title>
        <authorList>
            <person name="Takami H."/>
            <person name="Takaki Y."/>
            <person name="Uchiyama I."/>
        </authorList>
    </citation>
    <scope>NUCLEOTIDE SEQUENCE [LARGE SCALE GENOMIC DNA]</scope>
    <source>
        <strain>DSM 14371 / CIP 107618 / JCM 11309 / KCTC 3954 / HTE831</strain>
    </source>
</reference>
<accession>Q8ES99</accession>
<sequence length="237" mass="26875">MKAALLYEGKAKKVYQSSEDEHQLVLSYKNDATAFNGEKKSQFEGKGRLNNEISSLIFQRLHEAGISTHFIKRLDSTQQIVQKTSIIPLEVVIRNLATGSITKRLGIKEKVSFTPPLLELFYKDDALGDPLINDEHALLLTDITETELAEIKDKAREVNAALQEIFQSIGIKLVDFKLEFGRNKDGEILLSDEVSPDTCRLWDIETNEKLDKDVFRQGTGDLITVYQEILNRLEVHV</sequence>
<organism>
    <name type="scientific">Oceanobacillus iheyensis (strain DSM 14371 / CIP 107618 / JCM 11309 / KCTC 3954 / HTE831)</name>
    <dbReference type="NCBI Taxonomy" id="221109"/>
    <lineage>
        <taxon>Bacteria</taxon>
        <taxon>Bacillati</taxon>
        <taxon>Bacillota</taxon>
        <taxon>Bacilli</taxon>
        <taxon>Bacillales</taxon>
        <taxon>Bacillaceae</taxon>
        <taxon>Oceanobacillus</taxon>
    </lineage>
</organism>
<dbReference type="EC" id="6.3.2.6" evidence="1"/>
<dbReference type="EMBL" id="BA000028">
    <property type="protein sequence ID" value="BAC12698.1"/>
    <property type="molecule type" value="Genomic_DNA"/>
</dbReference>
<dbReference type="RefSeq" id="WP_011065150.1">
    <property type="nucleotide sequence ID" value="NC_004193.1"/>
</dbReference>
<dbReference type="SMR" id="Q8ES99"/>
<dbReference type="STRING" id="221109.gene:10732963"/>
<dbReference type="KEGG" id="oih:OB0742"/>
<dbReference type="eggNOG" id="COG0152">
    <property type="taxonomic scope" value="Bacteria"/>
</dbReference>
<dbReference type="HOGENOM" id="CLU_061495_2_0_9"/>
<dbReference type="OrthoDB" id="9801549at2"/>
<dbReference type="PhylomeDB" id="Q8ES99"/>
<dbReference type="UniPathway" id="UPA00074">
    <property type="reaction ID" value="UER00131"/>
</dbReference>
<dbReference type="Proteomes" id="UP000000822">
    <property type="component" value="Chromosome"/>
</dbReference>
<dbReference type="GO" id="GO:0005524">
    <property type="term" value="F:ATP binding"/>
    <property type="evidence" value="ECO:0007669"/>
    <property type="project" value="UniProtKB-KW"/>
</dbReference>
<dbReference type="GO" id="GO:0004639">
    <property type="term" value="F:phosphoribosylaminoimidazolesuccinocarboxamide synthase activity"/>
    <property type="evidence" value="ECO:0007669"/>
    <property type="project" value="UniProtKB-UniRule"/>
</dbReference>
<dbReference type="GO" id="GO:0006189">
    <property type="term" value="P:'de novo' IMP biosynthetic process"/>
    <property type="evidence" value="ECO:0007669"/>
    <property type="project" value="UniProtKB-UniRule"/>
</dbReference>
<dbReference type="GO" id="GO:0009236">
    <property type="term" value="P:cobalamin biosynthetic process"/>
    <property type="evidence" value="ECO:0007669"/>
    <property type="project" value="InterPro"/>
</dbReference>
<dbReference type="CDD" id="cd01415">
    <property type="entry name" value="SAICAR_synt_PurC"/>
    <property type="match status" value="1"/>
</dbReference>
<dbReference type="FunFam" id="3.30.470.20:FF:000006">
    <property type="entry name" value="Phosphoribosylaminoimidazole-succinocarboxamide synthase"/>
    <property type="match status" value="1"/>
</dbReference>
<dbReference type="Gene3D" id="3.30.470.20">
    <property type="entry name" value="ATP-grasp fold, B domain"/>
    <property type="match status" value="1"/>
</dbReference>
<dbReference type="Gene3D" id="3.30.200.20">
    <property type="entry name" value="Phosphorylase Kinase, domain 1"/>
    <property type="match status" value="1"/>
</dbReference>
<dbReference type="HAMAP" id="MF_00137">
    <property type="entry name" value="SAICAR_synth"/>
    <property type="match status" value="1"/>
</dbReference>
<dbReference type="InterPro" id="IPR028923">
    <property type="entry name" value="SAICAR_synt/ADE2_N"/>
</dbReference>
<dbReference type="InterPro" id="IPR033934">
    <property type="entry name" value="SAICAR_synt_PurC"/>
</dbReference>
<dbReference type="InterPro" id="IPR001636">
    <property type="entry name" value="SAICAR_synth"/>
</dbReference>
<dbReference type="InterPro" id="IPR050089">
    <property type="entry name" value="SAICAR_synthetase"/>
</dbReference>
<dbReference type="InterPro" id="IPR018236">
    <property type="entry name" value="SAICAR_synthetase_CS"/>
</dbReference>
<dbReference type="NCBIfam" id="TIGR00081">
    <property type="entry name" value="purC"/>
    <property type="match status" value="1"/>
</dbReference>
<dbReference type="PANTHER" id="PTHR43599">
    <property type="entry name" value="MULTIFUNCTIONAL PROTEIN ADE2"/>
    <property type="match status" value="1"/>
</dbReference>
<dbReference type="PANTHER" id="PTHR43599:SF3">
    <property type="entry name" value="SI:DKEY-6E2.2"/>
    <property type="match status" value="1"/>
</dbReference>
<dbReference type="Pfam" id="PF01259">
    <property type="entry name" value="SAICAR_synt"/>
    <property type="match status" value="1"/>
</dbReference>
<dbReference type="SUPFAM" id="SSF56104">
    <property type="entry name" value="SAICAR synthase-like"/>
    <property type="match status" value="1"/>
</dbReference>
<dbReference type="PROSITE" id="PS01057">
    <property type="entry name" value="SAICAR_SYNTHETASE_1"/>
    <property type="match status" value="1"/>
</dbReference>
<dbReference type="PROSITE" id="PS01058">
    <property type="entry name" value="SAICAR_SYNTHETASE_2"/>
    <property type="match status" value="1"/>
</dbReference>
<protein>
    <recommendedName>
        <fullName evidence="1">Phosphoribosylaminoimidazole-succinocarboxamide synthase</fullName>
        <ecNumber evidence="1">6.3.2.6</ecNumber>
    </recommendedName>
    <alternativeName>
        <fullName evidence="1">SAICAR synthetase</fullName>
    </alternativeName>
</protein>
<keyword id="KW-0067">ATP-binding</keyword>
<keyword id="KW-0436">Ligase</keyword>
<keyword id="KW-0547">Nucleotide-binding</keyword>
<keyword id="KW-0658">Purine biosynthesis</keyword>
<keyword id="KW-1185">Reference proteome</keyword>
<evidence type="ECO:0000255" key="1">
    <source>
        <dbReference type="HAMAP-Rule" id="MF_00137"/>
    </source>
</evidence>
<feature type="chain" id="PRO_0000100848" description="Phosphoribosylaminoimidazole-succinocarboxamide synthase">
    <location>
        <begin position="1"/>
        <end position="237"/>
    </location>
</feature>
<name>PUR7_OCEIH</name>
<proteinExistence type="inferred from homology"/>